<gene>
    <name type="primary">pcn-1</name>
    <name type="ORF">W03D2.4</name>
</gene>
<feature type="chain" id="PRO_0000149168" description="Proliferating cell nuclear antigen">
    <location>
        <begin position="1"/>
        <end position="263"/>
    </location>
</feature>
<feature type="DNA-binding region" evidence="2">
    <location>
        <begin position="61"/>
        <end position="80"/>
    </location>
</feature>
<name>PCNA_CAEEL</name>
<sequence>MFEAKLANAGLLKKIVESIKDLVTDAPFDCSETAMSLQAMDSSHVALVSLKLEVGLFDTYRCDRTINLGLSLANMSKALKCANNDDTCMLKYEENEGDSIIFTFADPKRDKTQDVTVKMMDIDSEHLGIPDQDYAVVCEMPAGEFQKTCKDLSTFSDSLNITATKAGIVFTGKGDIGSSVVTYSPSSNTDDETEAVTLEVKDPVNVNFSIKYMNQFTKATALSDRVRLSLCNDVPVVVEYPIEENGYLRFYLAPKIDDDENMD</sequence>
<organism>
    <name type="scientific">Caenorhabditis elegans</name>
    <dbReference type="NCBI Taxonomy" id="6239"/>
    <lineage>
        <taxon>Eukaryota</taxon>
        <taxon>Metazoa</taxon>
        <taxon>Ecdysozoa</taxon>
        <taxon>Nematoda</taxon>
        <taxon>Chromadorea</taxon>
        <taxon>Rhabditida</taxon>
        <taxon>Rhabditina</taxon>
        <taxon>Rhabditomorpha</taxon>
        <taxon>Rhabditoidea</taxon>
        <taxon>Rhabditidae</taxon>
        <taxon>Peloderinae</taxon>
        <taxon>Caenorhabditis</taxon>
    </lineage>
</organism>
<comment type="function">
    <text evidence="1">This protein is an auxiliary protein of DNA polymerase delta and is involved in the control of eukaryotic DNA replication by increasing the polymerase's processibility during elongation of the leading strand.</text>
</comment>
<comment type="subunit">
    <text evidence="1">Homotrimer. Forms a complex with activator 1 heteropentamer in the presence of ATP (By similarity).</text>
</comment>
<comment type="interaction">
    <interactant intactId="EBI-318162">
        <id>O02115</id>
    </interactant>
    <interactant intactId="EBI-323732">
        <id>G5EC44</id>
        <label>mrt-2</label>
    </interactant>
    <organismsDiffer>false</organismsDiffer>
    <experiments>3</experiments>
</comment>
<comment type="subcellular location">
    <subcellularLocation>
        <location>Nucleus</location>
    </subcellularLocation>
</comment>
<comment type="similarity">
    <text evidence="3">Belongs to the PCNA family.</text>
</comment>
<dbReference type="EMBL" id="FO080786">
    <property type="protein sequence ID" value="CCD66765.1"/>
    <property type="molecule type" value="Genomic_DNA"/>
</dbReference>
<dbReference type="PIR" id="T28761">
    <property type="entry name" value="T28761"/>
</dbReference>
<dbReference type="RefSeq" id="NP_500466.3">
    <property type="nucleotide sequence ID" value="NM_068065.10"/>
</dbReference>
<dbReference type="SMR" id="O02115"/>
<dbReference type="BioGRID" id="42297">
    <property type="interactions" value="32"/>
</dbReference>
<dbReference type="ComplexPortal" id="CPX-3721">
    <property type="entry name" value="PCNA homotrimer"/>
</dbReference>
<dbReference type="DIP" id="DIP-25347N"/>
<dbReference type="FunCoup" id="O02115">
    <property type="interactions" value="2527"/>
</dbReference>
<dbReference type="IntAct" id="O02115">
    <property type="interactions" value="12"/>
</dbReference>
<dbReference type="MINT" id="O02115"/>
<dbReference type="STRING" id="6239.W03D2.4.1"/>
<dbReference type="PaxDb" id="6239-W03D2.4"/>
<dbReference type="PeptideAtlas" id="O02115"/>
<dbReference type="EnsemblMetazoa" id="W03D2.4.1">
    <property type="protein sequence ID" value="W03D2.4.1"/>
    <property type="gene ID" value="WBGene00003955"/>
</dbReference>
<dbReference type="GeneID" id="177161"/>
<dbReference type="KEGG" id="cel:CELE_W03D2.4"/>
<dbReference type="UCSC" id="W03D2.4.1">
    <property type="organism name" value="c. elegans"/>
</dbReference>
<dbReference type="AGR" id="WB:WBGene00003955"/>
<dbReference type="CTD" id="177161"/>
<dbReference type="WormBase" id="W03D2.4">
    <property type="protein sequence ID" value="CE14512"/>
    <property type="gene ID" value="WBGene00003955"/>
    <property type="gene designation" value="pcn-1"/>
</dbReference>
<dbReference type="eggNOG" id="KOG1636">
    <property type="taxonomic scope" value="Eukaryota"/>
</dbReference>
<dbReference type="GeneTree" id="ENSGT00390000004965"/>
<dbReference type="HOGENOM" id="CLU_043978_3_0_1"/>
<dbReference type="InParanoid" id="O02115"/>
<dbReference type="OMA" id="EMKLINM"/>
<dbReference type="OrthoDB" id="534348at2759"/>
<dbReference type="PhylomeDB" id="O02115"/>
<dbReference type="Reactome" id="R-CEL-110312">
    <property type="pathway name" value="Translesion synthesis by REV1"/>
</dbReference>
<dbReference type="Reactome" id="R-CEL-110314">
    <property type="pathway name" value="Recognition of DNA damage by PCNA-containing replication complex"/>
</dbReference>
<dbReference type="Reactome" id="R-CEL-110320">
    <property type="pathway name" value="Translesion Synthesis by POLH"/>
</dbReference>
<dbReference type="Reactome" id="R-CEL-4615885">
    <property type="pathway name" value="SUMOylation of DNA replication proteins"/>
</dbReference>
<dbReference type="Reactome" id="R-CEL-5358565">
    <property type="pathway name" value="Mismatch repair (MMR) directed by MSH2:MSH6 (MutSalpha)"/>
</dbReference>
<dbReference type="Reactome" id="R-CEL-5651801">
    <property type="pathway name" value="PCNA-Dependent Long Patch Base Excision Repair"/>
</dbReference>
<dbReference type="Reactome" id="R-CEL-5655862">
    <property type="pathway name" value="Translesion synthesis by POLK"/>
</dbReference>
<dbReference type="Reactome" id="R-CEL-5656121">
    <property type="pathway name" value="Translesion synthesis by POLI"/>
</dbReference>
<dbReference type="Reactome" id="R-CEL-5656169">
    <property type="pathway name" value="Termination of translesion DNA synthesis"/>
</dbReference>
<dbReference type="Reactome" id="R-CEL-5696397">
    <property type="pathway name" value="Gap-filling DNA repair synthesis and ligation in GG-NER"/>
</dbReference>
<dbReference type="Reactome" id="R-CEL-5696400">
    <property type="pathway name" value="Dual Incision in GG-NER"/>
</dbReference>
<dbReference type="Reactome" id="R-CEL-6782135">
    <property type="pathway name" value="Dual incision in TC-NER"/>
</dbReference>
<dbReference type="Reactome" id="R-CEL-6782210">
    <property type="pathway name" value="Gap-filling DNA repair synthesis and ligation in TC-NER"/>
</dbReference>
<dbReference type="Reactome" id="R-CEL-69091">
    <property type="pathway name" value="Polymerase switching"/>
</dbReference>
<dbReference type="Reactome" id="R-CEL-69166">
    <property type="pathway name" value="Removal of the Flap Intermediate"/>
</dbReference>
<dbReference type="Reactome" id="R-CEL-69183">
    <property type="pathway name" value="Processive synthesis on the lagging strand"/>
</dbReference>
<dbReference type="SignaLink" id="O02115"/>
<dbReference type="PRO" id="PR:O02115"/>
<dbReference type="Proteomes" id="UP000001940">
    <property type="component" value="Chromosome IV"/>
</dbReference>
<dbReference type="Bgee" id="WBGene00003955">
    <property type="expression patterns" value="Expressed in embryo and 4 other cell types or tissues"/>
</dbReference>
<dbReference type="GO" id="GO:0005634">
    <property type="term" value="C:nucleus"/>
    <property type="evidence" value="ECO:0000314"/>
    <property type="project" value="ComplexPortal"/>
</dbReference>
<dbReference type="GO" id="GO:0043626">
    <property type="term" value="C:PCNA complex"/>
    <property type="evidence" value="ECO:0000318"/>
    <property type="project" value="GO_Central"/>
</dbReference>
<dbReference type="GO" id="GO:0003677">
    <property type="term" value="F:DNA binding"/>
    <property type="evidence" value="ECO:0007669"/>
    <property type="project" value="UniProtKB-KW"/>
</dbReference>
<dbReference type="GO" id="GO:0070182">
    <property type="term" value="F:DNA polymerase binding"/>
    <property type="evidence" value="ECO:0000353"/>
    <property type="project" value="WormBase"/>
</dbReference>
<dbReference type="GO" id="GO:0030337">
    <property type="term" value="F:DNA polymerase processivity factor activity"/>
    <property type="evidence" value="ECO:0000318"/>
    <property type="project" value="GO_Central"/>
</dbReference>
<dbReference type="GO" id="GO:0006272">
    <property type="term" value="P:leading strand elongation"/>
    <property type="evidence" value="ECO:0000318"/>
    <property type="project" value="GO_Central"/>
</dbReference>
<dbReference type="GO" id="GO:0006298">
    <property type="term" value="P:mismatch repair"/>
    <property type="evidence" value="ECO:0000318"/>
    <property type="project" value="GO_Central"/>
</dbReference>
<dbReference type="GO" id="GO:0045739">
    <property type="term" value="P:positive regulation of DNA repair"/>
    <property type="evidence" value="ECO:0000315"/>
    <property type="project" value="ComplexPortal"/>
</dbReference>
<dbReference type="GO" id="GO:0045740">
    <property type="term" value="P:positive regulation of DNA replication"/>
    <property type="evidence" value="ECO:0000315"/>
    <property type="project" value="ComplexPortal"/>
</dbReference>
<dbReference type="GO" id="GO:0019985">
    <property type="term" value="P:translesion synthesis"/>
    <property type="evidence" value="ECO:0000318"/>
    <property type="project" value="GO_Central"/>
</dbReference>
<dbReference type="CDD" id="cd00577">
    <property type="entry name" value="PCNA"/>
    <property type="match status" value="1"/>
</dbReference>
<dbReference type="FunFam" id="3.70.10.10:FF:000051">
    <property type="entry name" value="Proliferating cell nuclear antigen"/>
    <property type="match status" value="1"/>
</dbReference>
<dbReference type="Gene3D" id="3.70.10.10">
    <property type="match status" value="1"/>
</dbReference>
<dbReference type="HAMAP" id="MF_00317">
    <property type="entry name" value="DNApol_clamp_arch"/>
    <property type="match status" value="1"/>
</dbReference>
<dbReference type="InterPro" id="IPR046938">
    <property type="entry name" value="DNA_clamp_sf"/>
</dbReference>
<dbReference type="InterPro" id="IPR000730">
    <property type="entry name" value="Pr_cel_nuc_antig"/>
</dbReference>
<dbReference type="InterPro" id="IPR022649">
    <property type="entry name" value="Pr_cel_nuc_antig_C"/>
</dbReference>
<dbReference type="InterPro" id="IPR022659">
    <property type="entry name" value="Pr_cel_nuc_antig_CS"/>
</dbReference>
<dbReference type="InterPro" id="IPR022648">
    <property type="entry name" value="Pr_cel_nuc_antig_N"/>
</dbReference>
<dbReference type="NCBIfam" id="TIGR00590">
    <property type="entry name" value="pcna"/>
    <property type="match status" value="1"/>
</dbReference>
<dbReference type="PANTHER" id="PTHR11352">
    <property type="entry name" value="PROLIFERATING CELL NUCLEAR ANTIGEN"/>
    <property type="match status" value="1"/>
</dbReference>
<dbReference type="PANTHER" id="PTHR11352:SF0">
    <property type="entry name" value="PROLIFERATING CELL NUCLEAR ANTIGEN"/>
    <property type="match status" value="1"/>
</dbReference>
<dbReference type="Pfam" id="PF02747">
    <property type="entry name" value="PCNA_C"/>
    <property type="match status" value="1"/>
</dbReference>
<dbReference type="Pfam" id="PF00705">
    <property type="entry name" value="PCNA_N"/>
    <property type="match status" value="1"/>
</dbReference>
<dbReference type="PRINTS" id="PR00339">
    <property type="entry name" value="PCNACYCLIN"/>
</dbReference>
<dbReference type="SUPFAM" id="SSF55979">
    <property type="entry name" value="DNA clamp"/>
    <property type="match status" value="2"/>
</dbReference>
<dbReference type="PROSITE" id="PS01251">
    <property type="entry name" value="PCNA_1"/>
    <property type="match status" value="1"/>
</dbReference>
<proteinExistence type="evidence at protein level"/>
<keyword id="KW-0235">DNA replication</keyword>
<keyword id="KW-0238">DNA-binding</keyword>
<keyword id="KW-0539">Nucleus</keyword>
<keyword id="KW-1185">Reference proteome</keyword>
<accession>O02115</accession>
<reference key="1">
    <citation type="journal article" date="1998" name="Science">
        <title>Genome sequence of the nematode C. elegans: a platform for investigating biology.</title>
        <authorList>
            <consortium name="The C. elegans sequencing consortium"/>
        </authorList>
    </citation>
    <scope>NUCLEOTIDE SEQUENCE [LARGE SCALE GENOMIC DNA]</scope>
    <source>
        <strain>Bristol N2</strain>
    </source>
</reference>
<protein>
    <recommendedName>
        <fullName>Proliferating cell nuclear antigen</fullName>
        <shortName>PCNA</shortName>
    </recommendedName>
</protein>
<evidence type="ECO:0000250" key="1"/>
<evidence type="ECO:0000255" key="2"/>
<evidence type="ECO:0000305" key="3"/>